<gene>
    <name evidence="1" type="primary">rpsS</name>
    <name evidence="1" type="synonym">rps19</name>
    <name type="ordered locus">Npun_R4386</name>
</gene>
<sequence length="92" mass="10366">MGRSLKKGPFVADHLLKKIEKLNDNNRKEVIKTWSRASTILPLMVGHTIAVHNGRQHVPVFVNEQMVGHKLGEFAPTRTYRGHGKSDKKAGR</sequence>
<proteinExistence type="inferred from homology"/>
<protein>
    <recommendedName>
        <fullName evidence="1">Small ribosomal subunit protein uS19</fullName>
    </recommendedName>
    <alternativeName>
        <fullName evidence="2">30S ribosomal protein S19</fullName>
    </alternativeName>
</protein>
<dbReference type="EMBL" id="CP001037">
    <property type="protein sequence ID" value="ACC82759.1"/>
    <property type="molecule type" value="Genomic_DNA"/>
</dbReference>
<dbReference type="RefSeq" id="WP_012410721.1">
    <property type="nucleotide sequence ID" value="NC_010628.1"/>
</dbReference>
<dbReference type="SMR" id="B2ITQ1"/>
<dbReference type="STRING" id="63737.Npun_R4386"/>
<dbReference type="EnsemblBacteria" id="ACC82759">
    <property type="protein sequence ID" value="ACC82759"/>
    <property type="gene ID" value="Npun_R4386"/>
</dbReference>
<dbReference type="KEGG" id="npu:Npun_R4386"/>
<dbReference type="eggNOG" id="COG0185">
    <property type="taxonomic scope" value="Bacteria"/>
</dbReference>
<dbReference type="HOGENOM" id="CLU_144911_0_1_3"/>
<dbReference type="OrthoDB" id="9797833at2"/>
<dbReference type="PhylomeDB" id="B2ITQ1"/>
<dbReference type="Proteomes" id="UP000001191">
    <property type="component" value="Chromosome"/>
</dbReference>
<dbReference type="GO" id="GO:0005737">
    <property type="term" value="C:cytoplasm"/>
    <property type="evidence" value="ECO:0007669"/>
    <property type="project" value="UniProtKB-ARBA"/>
</dbReference>
<dbReference type="GO" id="GO:0015935">
    <property type="term" value="C:small ribosomal subunit"/>
    <property type="evidence" value="ECO:0007669"/>
    <property type="project" value="InterPro"/>
</dbReference>
<dbReference type="GO" id="GO:0019843">
    <property type="term" value="F:rRNA binding"/>
    <property type="evidence" value="ECO:0007669"/>
    <property type="project" value="UniProtKB-UniRule"/>
</dbReference>
<dbReference type="GO" id="GO:0003735">
    <property type="term" value="F:structural constituent of ribosome"/>
    <property type="evidence" value="ECO:0007669"/>
    <property type="project" value="InterPro"/>
</dbReference>
<dbReference type="GO" id="GO:0000028">
    <property type="term" value="P:ribosomal small subunit assembly"/>
    <property type="evidence" value="ECO:0007669"/>
    <property type="project" value="TreeGrafter"/>
</dbReference>
<dbReference type="GO" id="GO:0006412">
    <property type="term" value="P:translation"/>
    <property type="evidence" value="ECO:0007669"/>
    <property type="project" value="UniProtKB-UniRule"/>
</dbReference>
<dbReference type="FunFam" id="3.30.860.10:FF:000001">
    <property type="entry name" value="30S ribosomal protein S19"/>
    <property type="match status" value="1"/>
</dbReference>
<dbReference type="Gene3D" id="3.30.860.10">
    <property type="entry name" value="30s Ribosomal Protein S19, Chain A"/>
    <property type="match status" value="1"/>
</dbReference>
<dbReference type="HAMAP" id="MF_00531">
    <property type="entry name" value="Ribosomal_uS19"/>
    <property type="match status" value="1"/>
</dbReference>
<dbReference type="InterPro" id="IPR002222">
    <property type="entry name" value="Ribosomal_uS19"/>
</dbReference>
<dbReference type="InterPro" id="IPR005732">
    <property type="entry name" value="Ribosomal_uS19_bac-type"/>
</dbReference>
<dbReference type="InterPro" id="IPR020934">
    <property type="entry name" value="Ribosomal_uS19_CS"/>
</dbReference>
<dbReference type="InterPro" id="IPR023575">
    <property type="entry name" value="Ribosomal_uS19_SF"/>
</dbReference>
<dbReference type="NCBIfam" id="TIGR01050">
    <property type="entry name" value="rpsS_bact"/>
    <property type="match status" value="1"/>
</dbReference>
<dbReference type="PANTHER" id="PTHR11880">
    <property type="entry name" value="RIBOSOMAL PROTEIN S19P FAMILY MEMBER"/>
    <property type="match status" value="1"/>
</dbReference>
<dbReference type="PANTHER" id="PTHR11880:SF8">
    <property type="entry name" value="SMALL RIBOSOMAL SUBUNIT PROTEIN US19M"/>
    <property type="match status" value="1"/>
</dbReference>
<dbReference type="Pfam" id="PF00203">
    <property type="entry name" value="Ribosomal_S19"/>
    <property type="match status" value="1"/>
</dbReference>
<dbReference type="PIRSF" id="PIRSF002144">
    <property type="entry name" value="Ribosomal_S19"/>
    <property type="match status" value="1"/>
</dbReference>
<dbReference type="PRINTS" id="PR00975">
    <property type="entry name" value="RIBOSOMALS19"/>
</dbReference>
<dbReference type="SUPFAM" id="SSF54570">
    <property type="entry name" value="Ribosomal protein S19"/>
    <property type="match status" value="1"/>
</dbReference>
<dbReference type="PROSITE" id="PS00323">
    <property type="entry name" value="RIBOSOMAL_S19"/>
    <property type="match status" value="1"/>
</dbReference>
<name>RS19_NOSP7</name>
<comment type="function">
    <text evidence="1">Protein S19 forms a complex with S13 that binds strongly to the 16S ribosomal RNA.</text>
</comment>
<comment type="similarity">
    <text evidence="1">Belongs to the universal ribosomal protein uS19 family.</text>
</comment>
<keyword id="KW-1185">Reference proteome</keyword>
<keyword id="KW-0687">Ribonucleoprotein</keyword>
<keyword id="KW-0689">Ribosomal protein</keyword>
<keyword id="KW-0694">RNA-binding</keyword>
<keyword id="KW-0699">rRNA-binding</keyword>
<reference key="1">
    <citation type="journal article" date="2013" name="Plant Physiol.">
        <title>A Nostoc punctiforme Sugar Transporter Necessary to Establish a Cyanobacterium-Plant Symbiosis.</title>
        <authorList>
            <person name="Ekman M."/>
            <person name="Picossi S."/>
            <person name="Campbell E.L."/>
            <person name="Meeks J.C."/>
            <person name="Flores E."/>
        </authorList>
    </citation>
    <scope>NUCLEOTIDE SEQUENCE [LARGE SCALE GENOMIC DNA]</scope>
    <source>
        <strain>ATCC 29133 / PCC 73102</strain>
    </source>
</reference>
<accession>B2ITQ1</accession>
<evidence type="ECO:0000255" key="1">
    <source>
        <dbReference type="HAMAP-Rule" id="MF_00531"/>
    </source>
</evidence>
<evidence type="ECO:0000305" key="2"/>
<feature type="chain" id="PRO_1000128010" description="Small ribosomal subunit protein uS19">
    <location>
        <begin position="1"/>
        <end position="92"/>
    </location>
</feature>
<organism>
    <name type="scientific">Nostoc punctiforme (strain ATCC 29133 / PCC 73102)</name>
    <dbReference type="NCBI Taxonomy" id="63737"/>
    <lineage>
        <taxon>Bacteria</taxon>
        <taxon>Bacillati</taxon>
        <taxon>Cyanobacteriota</taxon>
        <taxon>Cyanophyceae</taxon>
        <taxon>Nostocales</taxon>
        <taxon>Nostocaceae</taxon>
        <taxon>Nostoc</taxon>
    </lineage>
</organism>